<reference key="1">
    <citation type="submission" date="2005-09" db="EMBL/GenBank/DDBJ databases">
        <title>Complete sequence of chromosome 1 of Rhodobacter sphaeroides 2.4.1.</title>
        <authorList>
            <person name="Copeland A."/>
            <person name="Lucas S."/>
            <person name="Lapidus A."/>
            <person name="Barry K."/>
            <person name="Detter J.C."/>
            <person name="Glavina T."/>
            <person name="Hammon N."/>
            <person name="Israni S."/>
            <person name="Pitluck S."/>
            <person name="Richardson P."/>
            <person name="Mackenzie C."/>
            <person name="Choudhary M."/>
            <person name="Larimer F."/>
            <person name="Hauser L.J."/>
            <person name="Land M."/>
            <person name="Donohue T.J."/>
            <person name="Kaplan S."/>
        </authorList>
    </citation>
    <scope>NUCLEOTIDE SEQUENCE [LARGE SCALE GENOMIC DNA]</scope>
    <source>
        <strain>ATCC 17023 / DSM 158 / JCM 6121 / CCUG 31486 / LMG 2827 / NBRC 12203 / NCIMB 8253 / ATH 2.4.1.</strain>
    </source>
</reference>
<gene>
    <name evidence="1" type="primary">dxs1</name>
    <name type="ordered locus">RHOS4_18580</name>
    <name type="ORF">RSP_0254</name>
</gene>
<name>DXS1_CERS4</name>
<comment type="function">
    <text evidence="1">Catalyzes the acyloin condensation reaction between C atoms 2 and 3 of pyruvate and glyceraldehyde 3-phosphate to yield 1-deoxy-D-xylulose-5-phosphate (DXP).</text>
</comment>
<comment type="catalytic activity">
    <reaction evidence="1">
        <text>D-glyceraldehyde 3-phosphate + pyruvate + H(+) = 1-deoxy-D-xylulose 5-phosphate + CO2</text>
        <dbReference type="Rhea" id="RHEA:12605"/>
        <dbReference type="ChEBI" id="CHEBI:15361"/>
        <dbReference type="ChEBI" id="CHEBI:15378"/>
        <dbReference type="ChEBI" id="CHEBI:16526"/>
        <dbReference type="ChEBI" id="CHEBI:57792"/>
        <dbReference type="ChEBI" id="CHEBI:59776"/>
        <dbReference type="EC" id="2.2.1.7"/>
    </reaction>
</comment>
<comment type="cofactor">
    <cofactor evidence="1">
        <name>Mg(2+)</name>
        <dbReference type="ChEBI" id="CHEBI:18420"/>
    </cofactor>
    <text evidence="1">Binds 1 Mg(2+) ion per subunit.</text>
</comment>
<comment type="cofactor">
    <cofactor evidence="1">
        <name>thiamine diphosphate</name>
        <dbReference type="ChEBI" id="CHEBI:58937"/>
    </cofactor>
    <text evidence="1">Binds 1 thiamine pyrophosphate per subunit.</text>
</comment>
<comment type="pathway">
    <text evidence="1">Metabolic intermediate biosynthesis; 1-deoxy-D-xylulose 5-phosphate biosynthesis; 1-deoxy-D-xylulose 5-phosphate from D-glyceraldehyde 3-phosphate and pyruvate: step 1/1.</text>
</comment>
<comment type="subunit">
    <text evidence="1">Homodimer.</text>
</comment>
<comment type="similarity">
    <text evidence="1">Belongs to the transketolase family. DXPS subfamily.</text>
</comment>
<evidence type="ECO:0000255" key="1">
    <source>
        <dbReference type="HAMAP-Rule" id="MF_00315"/>
    </source>
</evidence>
<feature type="chain" id="PRO_0000256475" description="1-deoxy-D-xylulose-5-phosphate synthase 1">
    <location>
        <begin position="1"/>
        <end position="648"/>
    </location>
</feature>
<feature type="binding site" evidence="1">
    <location>
        <position position="82"/>
    </location>
    <ligand>
        <name>thiamine diphosphate</name>
        <dbReference type="ChEBI" id="CHEBI:58937"/>
    </ligand>
</feature>
<feature type="binding site" evidence="1">
    <location>
        <begin position="123"/>
        <end position="125"/>
    </location>
    <ligand>
        <name>thiamine diphosphate</name>
        <dbReference type="ChEBI" id="CHEBI:58937"/>
    </ligand>
</feature>
<feature type="binding site" evidence="1">
    <location>
        <position position="154"/>
    </location>
    <ligand>
        <name>Mg(2+)</name>
        <dbReference type="ChEBI" id="CHEBI:18420"/>
    </ligand>
</feature>
<feature type="binding site" evidence="1">
    <location>
        <begin position="155"/>
        <end position="156"/>
    </location>
    <ligand>
        <name>thiamine diphosphate</name>
        <dbReference type="ChEBI" id="CHEBI:58937"/>
    </ligand>
</feature>
<feature type="binding site" evidence="1">
    <location>
        <position position="183"/>
    </location>
    <ligand>
        <name>Mg(2+)</name>
        <dbReference type="ChEBI" id="CHEBI:18420"/>
    </ligand>
</feature>
<feature type="binding site" evidence="1">
    <location>
        <position position="183"/>
    </location>
    <ligand>
        <name>thiamine diphosphate</name>
        <dbReference type="ChEBI" id="CHEBI:58937"/>
    </ligand>
</feature>
<feature type="binding site" evidence="1">
    <location>
        <position position="292"/>
    </location>
    <ligand>
        <name>thiamine diphosphate</name>
        <dbReference type="ChEBI" id="CHEBI:58937"/>
    </ligand>
</feature>
<feature type="binding site" evidence="1">
    <location>
        <position position="374"/>
    </location>
    <ligand>
        <name>thiamine diphosphate</name>
        <dbReference type="ChEBI" id="CHEBI:58937"/>
    </ligand>
</feature>
<keyword id="KW-0414">Isoprene biosynthesis</keyword>
<keyword id="KW-0460">Magnesium</keyword>
<keyword id="KW-0479">Metal-binding</keyword>
<keyword id="KW-1185">Reference proteome</keyword>
<keyword id="KW-0784">Thiamine biosynthesis</keyword>
<keyword id="KW-0786">Thiamine pyrophosphate</keyword>
<keyword id="KW-0808">Transferase</keyword>
<dbReference type="EC" id="2.2.1.7" evidence="1"/>
<dbReference type="EMBL" id="CP000143">
    <property type="protein sequence ID" value="ABA79426.1"/>
    <property type="molecule type" value="Genomic_DNA"/>
</dbReference>
<dbReference type="RefSeq" id="WP_011338107.1">
    <property type="nucleotide sequence ID" value="NC_007493.2"/>
</dbReference>
<dbReference type="RefSeq" id="YP_353327.1">
    <property type="nucleotide sequence ID" value="NC_007493.2"/>
</dbReference>
<dbReference type="SMR" id="Q3J1A8"/>
<dbReference type="STRING" id="272943.RSP_0254"/>
<dbReference type="EnsemblBacteria" id="ABA79426">
    <property type="protein sequence ID" value="ABA79426"/>
    <property type="gene ID" value="RSP_0254"/>
</dbReference>
<dbReference type="GeneID" id="3719396"/>
<dbReference type="KEGG" id="rsp:RSP_0254"/>
<dbReference type="PATRIC" id="fig|272943.9.peg.2197"/>
<dbReference type="eggNOG" id="COG1154">
    <property type="taxonomic scope" value="Bacteria"/>
</dbReference>
<dbReference type="OrthoDB" id="9803371at2"/>
<dbReference type="PhylomeDB" id="Q3J1A8"/>
<dbReference type="UniPathway" id="UPA00064">
    <property type="reaction ID" value="UER00091"/>
</dbReference>
<dbReference type="Proteomes" id="UP000002703">
    <property type="component" value="Chromosome 1"/>
</dbReference>
<dbReference type="GO" id="GO:0008661">
    <property type="term" value="F:1-deoxy-D-xylulose-5-phosphate synthase activity"/>
    <property type="evidence" value="ECO:0007669"/>
    <property type="project" value="UniProtKB-UniRule"/>
</dbReference>
<dbReference type="GO" id="GO:0000287">
    <property type="term" value="F:magnesium ion binding"/>
    <property type="evidence" value="ECO:0007669"/>
    <property type="project" value="UniProtKB-UniRule"/>
</dbReference>
<dbReference type="GO" id="GO:0030976">
    <property type="term" value="F:thiamine pyrophosphate binding"/>
    <property type="evidence" value="ECO:0007669"/>
    <property type="project" value="UniProtKB-UniRule"/>
</dbReference>
<dbReference type="GO" id="GO:0052865">
    <property type="term" value="P:1-deoxy-D-xylulose 5-phosphate biosynthetic process"/>
    <property type="evidence" value="ECO:0007669"/>
    <property type="project" value="UniProtKB-UniPathway"/>
</dbReference>
<dbReference type="GO" id="GO:0019682">
    <property type="term" value="P:glyceraldehyde-3-phosphate metabolic process"/>
    <property type="evidence" value="ECO:0007669"/>
    <property type="project" value="UniProtKB-ARBA"/>
</dbReference>
<dbReference type="GO" id="GO:0016114">
    <property type="term" value="P:terpenoid biosynthetic process"/>
    <property type="evidence" value="ECO:0007669"/>
    <property type="project" value="UniProtKB-UniRule"/>
</dbReference>
<dbReference type="GO" id="GO:0009228">
    <property type="term" value="P:thiamine biosynthetic process"/>
    <property type="evidence" value="ECO:0007669"/>
    <property type="project" value="UniProtKB-UniRule"/>
</dbReference>
<dbReference type="CDD" id="cd02007">
    <property type="entry name" value="TPP_DXS"/>
    <property type="match status" value="1"/>
</dbReference>
<dbReference type="CDD" id="cd07033">
    <property type="entry name" value="TPP_PYR_DXS_TK_like"/>
    <property type="match status" value="1"/>
</dbReference>
<dbReference type="FunFam" id="3.40.50.920:FF:000002">
    <property type="entry name" value="1-deoxy-D-xylulose-5-phosphate synthase"/>
    <property type="match status" value="1"/>
</dbReference>
<dbReference type="FunFam" id="3.40.50.970:FF:000005">
    <property type="entry name" value="1-deoxy-D-xylulose-5-phosphate synthase"/>
    <property type="match status" value="1"/>
</dbReference>
<dbReference type="Gene3D" id="3.40.50.920">
    <property type="match status" value="1"/>
</dbReference>
<dbReference type="Gene3D" id="3.40.50.970">
    <property type="match status" value="2"/>
</dbReference>
<dbReference type="HAMAP" id="MF_00315">
    <property type="entry name" value="DXP_synth"/>
    <property type="match status" value="1"/>
</dbReference>
<dbReference type="InterPro" id="IPR005477">
    <property type="entry name" value="Dxylulose-5-P_synthase"/>
</dbReference>
<dbReference type="InterPro" id="IPR029061">
    <property type="entry name" value="THDP-binding"/>
</dbReference>
<dbReference type="InterPro" id="IPR000399">
    <property type="entry name" value="TPP-bd_CS"/>
</dbReference>
<dbReference type="InterPro" id="IPR009014">
    <property type="entry name" value="Transketo_C/PFOR_II"/>
</dbReference>
<dbReference type="InterPro" id="IPR005475">
    <property type="entry name" value="Transketolase-like_Pyr-bd"/>
</dbReference>
<dbReference type="InterPro" id="IPR033248">
    <property type="entry name" value="Transketolase_C"/>
</dbReference>
<dbReference type="InterPro" id="IPR049557">
    <property type="entry name" value="Transketolase_CS"/>
</dbReference>
<dbReference type="NCBIfam" id="TIGR00204">
    <property type="entry name" value="dxs"/>
    <property type="match status" value="1"/>
</dbReference>
<dbReference type="NCBIfam" id="NF003933">
    <property type="entry name" value="PRK05444.2-2"/>
    <property type="match status" value="1"/>
</dbReference>
<dbReference type="PANTHER" id="PTHR43322">
    <property type="entry name" value="1-D-DEOXYXYLULOSE 5-PHOSPHATE SYNTHASE-RELATED"/>
    <property type="match status" value="1"/>
</dbReference>
<dbReference type="PANTHER" id="PTHR43322:SF5">
    <property type="entry name" value="1-DEOXY-D-XYLULOSE-5-PHOSPHATE SYNTHASE, CHLOROPLASTIC"/>
    <property type="match status" value="1"/>
</dbReference>
<dbReference type="Pfam" id="PF13292">
    <property type="entry name" value="DXP_synthase_N"/>
    <property type="match status" value="1"/>
</dbReference>
<dbReference type="Pfam" id="PF02779">
    <property type="entry name" value="Transket_pyr"/>
    <property type="match status" value="1"/>
</dbReference>
<dbReference type="Pfam" id="PF02780">
    <property type="entry name" value="Transketolase_C"/>
    <property type="match status" value="1"/>
</dbReference>
<dbReference type="SMART" id="SM00861">
    <property type="entry name" value="Transket_pyr"/>
    <property type="match status" value="1"/>
</dbReference>
<dbReference type="SUPFAM" id="SSF52518">
    <property type="entry name" value="Thiamin diphosphate-binding fold (THDP-binding)"/>
    <property type="match status" value="2"/>
</dbReference>
<dbReference type="SUPFAM" id="SSF52922">
    <property type="entry name" value="TK C-terminal domain-like"/>
    <property type="match status" value="1"/>
</dbReference>
<dbReference type="PROSITE" id="PS00801">
    <property type="entry name" value="TRANSKETOLASE_1"/>
    <property type="match status" value="1"/>
</dbReference>
<proteinExistence type="inferred from homology"/>
<organism>
    <name type="scientific">Cereibacter sphaeroides (strain ATCC 17023 / DSM 158 / JCM 6121 / CCUG 31486 / LMG 2827 / NBRC 12203 / NCIMB 8253 / ATH 2.4.1.)</name>
    <name type="common">Rhodobacter sphaeroides</name>
    <dbReference type="NCBI Taxonomy" id="272943"/>
    <lineage>
        <taxon>Bacteria</taxon>
        <taxon>Pseudomonadati</taxon>
        <taxon>Pseudomonadota</taxon>
        <taxon>Alphaproteobacteria</taxon>
        <taxon>Rhodobacterales</taxon>
        <taxon>Paracoccaceae</taxon>
        <taxon>Cereibacter</taxon>
    </lineage>
</organism>
<sequence>MTNPTPRPETPLLDRVCCPADMKALSDAELERLADEVRSEVISVVAETGGHLGSSLGVVELTVALHAVFNTPTDKLVWDVGHQCYPHKILTGRREQMRTLRQKGGLSGFTKRSESAYDPFGAAHSSTSISAALGFAMGRELGQPVGDTIAVIGDGSITAGMAYEALNHAGHLNKRLFVILNDNDMSIAPPVGALARYLVNLSSKAPFATLRAAADGLEASLPGPLRDGARRARQLVTGMPGGGTLFEELGFTYVGPIDGHDMEALLQTLRAARARTTGPVLIHVVTKKGKGYAPAENAPDKYHGVNKFDPVTGEQKKSVANAPNYTKVFGSTLTEEAARDPRIVAITAAMPSGTGVDIMQKRFPNRVFDVGIAEQHAVTFAAGLAGAGMKPFCAIYSSFLQRGYDQIAHDVALQNLPVRFVIDRAGLVGADGATHAGAFDVGFITSLPNMTVMAAADEAELIHMIATAVAFDEGPIAFRFPRGEGVGVEMPERGTVLEPGRGRVVREGTDVAILSFGAHLHEALQAAKLLEAEGVSVTVADARFSRPLDTGLIDQLVRHHAALVTVEQGAMGGFGAHVMHYLANSGGFDGGLALRVMTLPDRFIEQASPEDMYADAGLRAEDIAATARGALARGRVMPLRQTAKPRAV</sequence>
<protein>
    <recommendedName>
        <fullName evidence="1">1-deoxy-D-xylulose-5-phosphate synthase 1</fullName>
        <ecNumber evidence="1">2.2.1.7</ecNumber>
    </recommendedName>
    <alternativeName>
        <fullName evidence="1">1-deoxyxylulose-5-phosphate synthase 1</fullName>
        <shortName evidence="1">DXP synthase 1</shortName>
        <shortName evidence="1">DXPS 1</shortName>
    </alternativeName>
</protein>
<accession>Q3J1A8</accession>